<evidence type="ECO:0000255" key="1">
    <source>
        <dbReference type="HAMAP-Rule" id="MF_00391"/>
    </source>
</evidence>
<evidence type="ECO:0000256" key="2">
    <source>
        <dbReference type="SAM" id="MobiDB-lite"/>
    </source>
</evidence>
<evidence type="ECO:0000305" key="3"/>
<gene>
    <name evidence="1" type="primary">rpmH</name>
    <name type="ordered locus">OEOE_1864</name>
</gene>
<reference key="1">
    <citation type="journal article" date="2006" name="Proc. Natl. Acad. Sci. U.S.A.">
        <title>Comparative genomics of the lactic acid bacteria.</title>
        <authorList>
            <person name="Makarova K.S."/>
            <person name="Slesarev A."/>
            <person name="Wolf Y.I."/>
            <person name="Sorokin A."/>
            <person name="Mirkin B."/>
            <person name="Koonin E.V."/>
            <person name="Pavlov A."/>
            <person name="Pavlova N."/>
            <person name="Karamychev V."/>
            <person name="Polouchine N."/>
            <person name="Shakhova V."/>
            <person name="Grigoriev I."/>
            <person name="Lou Y."/>
            <person name="Rohksar D."/>
            <person name="Lucas S."/>
            <person name="Huang K."/>
            <person name="Goodstein D.M."/>
            <person name="Hawkins T."/>
            <person name="Plengvidhya V."/>
            <person name="Welker D."/>
            <person name="Hughes J."/>
            <person name="Goh Y."/>
            <person name="Benson A."/>
            <person name="Baldwin K."/>
            <person name="Lee J.-H."/>
            <person name="Diaz-Muniz I."/>
            <person name="Dosti B."/>
            <person name="Smeianov V."/>
            <person name="Wechter W."/>
            <person name="Barabote R."/>
            <person name="Lorca G."/>
            <person name="Altermann E."/>
            <person name="Barrangou R."/>
            <person name="Ganesan B."/>
            <person name="Xie Y."/>
            <person name="Rawsthorne H."/>
            <person name="Tamir D."/>
            <person name="Parker C."/>
            <person name="Breidt F."/>
            <person name="Broadbent J.R."/>
            <person name="Hutkins R."/>
            <person name="O'Sullivan D."/>
            <person name="Steele J."/>
            <person name="Unlu G."/>
            <person name="Saier M.H. Jr."/>
            <person name="Klaenhammer T."/>
            <person name="Richardson P."/>
            <person name="Kozyavkin S."/>
            <person name="Weimer B.C."/>
            <person name="Mills D.A."/>
        </authorList>
    </citation>
    <scope>NUCLEOTIDE SEQUENCE [LARGE SCALE GENOMIC DNA]</scope>
    <source>
        <strain>ATCC BAA-331 / PSU-1</strain>
    </source>
</reference>
<accession>Q04CX6</accession>
<organism>
    <name type="scientific">Oenococcus oeni (strain ATCC BAA-331 / PSU-1)</name>
    <dbReference type="NCBI Taxonomy" id="203123"/>
    <lineage>
        <taxon>Bacteria</taxon>
        <taxon>Bacillati</taxon>
        <taxon>Bacillota</taxon>
        <taxon>Bacilli</taxon>
        <taxon>Lactobacillales</taxon>
        <taxon>Lactobacillaceae</taxon>
        <taxon>Oenococcus</taxon>
    </lineage>
</organism>
<sequence>MKRTYQPKKRHLQRVHGFRKRMSTANGRKVLARRRAKGRKVLAA</sequence>
<protein>
    <recommendedName>
        <fullName evidence="1">Large ribosomal subunit protein bL34</fullName>
    </recommendedName>
    <alternativeName>
        <fullName evidence="3">50S ribosomal protein L34</fullName>
    </alternativeName>
</protein>
<keyword id="KW-1185">Reference proteome</keyword>
<keyword id="KW-0687">Ribonucleoprotein</keyword>
<keyword id="KW-0689">Ribosomal protein</keyword>
<comment type="similarity">
    <text evidence="1">Belongs to the bacterial ribosomal protein bL34 family.</text>
</comment>
<dbReference type="EMBL" id="CP000411">
    <property type="protein sequence ID" value="ABJ57696.1"/>
    <property type="molecule type" value="Genomic_DNA"/>
</dbReference>
<dbReference type="RefSeq" id="WP_002819722.1">
    <property type="nucleotide sequence ID" value="NC_008528.1"/>
</dbReference>
<dbReference type="SMR" id="Q04CX6"/>
<dbReference type="STRING" id="203123.OEOE_1864"/>
<dbReference type="GeneID" id="75066783"/>
<dbReference type="KEGG" id="ooe:OEOE_1864"/>
<dbReference type="eggNOG" id="COG0230">
    <property type="taxonomic scope" value="Bacteria"/>
</dbReference>
<dbReference type="HOGENOM" id="CLU_129938_2_0_9"/>
<dbReference type="Proteomes" id="UP000000774">
    <property type="component" value="Chromosome"/>
</dbReference>
<dbReference type="GO" id="GO:1990904">
    <property type="term" value="C:ribonucleoprotein complex"/>
    <property type="evidence" value="ECO:0007669"/>
    <property type="project" value="UniProtKB-KW"/>
</dbReference>
<dbReference type="GO" id="GO:0005840">
    <property type="term" value="C:ribosome"/>
    <property type="evidence" value="ECO:0007669"/>
    <property type="project" value="UniProtKB-KW"/>
</dbReference>
<dbReference type="GO" id="GO:0003735">
    <property type="term" value="F:structural constituent of ribosome"/>
    <property type="evidence" value="ECO:0007669"/>
    <property type="project" value="InterPro"/>
</dbReference>
<dbReference type="GO" id="GO:0006412">
    <property type="term" value="P:translation"/>
    <property type="evidence" value="ECO:0007669"/>
    <property type="project" value="UniProtKB-UniRule"/>
</dbReference>
<dbReference type="FunFam" id="1.10.287.3980:FF:000001">
    <property type="entry name" value="Mitochondrial ribosomal protein L34"/>
    <property type="match status" value="1"/>
</dbReference>
<dbReference type="Gene3D" id="1.10.287.3980">
    <property type="match status" value="1"/>
</dbReference>
<dbReference type="HAMAP" id="MF_00391">
    <property type="entry name" value="Ribosomal_bL34"/>
    <property type="match status" value="1"/>
</dbReference>
<dbReference type="InterPro" id="IPR000271">
    <property type="entry name" value="Ribosomal_bL34"/>
</dbReference>
<dbReference type="NCBIfam" id="TIGR01030">
    <property type="entry name" value="rpmH_bact"/>
    <property type="match status" value="1"/>
</dbReference>
<dbReference type="PANTHER" id="PTHR14503:SF4">
    <property type="entry name" value="LARGE RIBOSOMAL SUBUNIT PROTEIN BL34M"/>
    <property type="match status" value="1"/>
</dbReference>
<dbReference type="PANTHER" id="PTHR14503">
    <property type="entry name" value="MITOCHONDRIAL RIBOSOMAL PROTEIN 34 FAMILY MEMBER"/>
    <property type="match status" value="1"/>
</dbReference>
<dbReference type="Pfam" id="PF00468">
    <property type="entry name" value="Ribosomal_L34"/>
    <property type="match status" value="1"/>
</dbReference>
<feature type="chain" id="PRO_1000060761" description="Large ribosomal subunit protein bL34">
    <location>
        <begin position="1"/>
        <end position="44"/>
    </location>
</feature>
<feature type="region of interest" description="Disordered" evidence="2">
    <location>
        <begin position="1"/>
        <end position="25"/>
    </location>
</feature>
<feature type="compositionally biased region" description="Basic residues" evidence="2">
    <location>
        <begin position="1"/>
        <end position="22"/>
    </location>
</feature>
<name>RL34_OENOB</name>
<proteinExistence type="inferred from homology"/>